<proteinExistence type="evidence at protein level"/>
<feature type="initiator methionine" description="Removed" evidence="2">
    <location>
        <position position="1"/>
    </location>
</feature>
<feature type="chain" id="PRO_0000057983" description="NudC domain-containing protein 2">
    <location>
        <begin position="2"/>
        <end position="157"/>
    </location>
</feature>
<feature type="domain" description="CS" evidence="3">
    <location>
        <begin position="14"/>
        <end position="104"/>
    </location>
</feature>
<feature type="region of interest" description="Disordered" evidence="4">
    <location>
        <begin position="134"/>
        <end position="157"/>
    </location>
</feature>
<feature type="modified residue" description="N-acetylserine" evidence="2">
    <location>
        <position position="2"/>
    </location>
</feature>
<feature type="modified residue" description="Phosphoserine" evidence="2">
    <location>
        <position position="142"/>
    </location>
</feature>
<feature type="modified residue" description="Phosphotyrosine" evidence="6">
    <location>
        <position position="145"/>
    </location>
</feature>
<feature type="sequence conflict" description="In Ref. 1; BAB23283/BAB27222." evidence="5" ref="1">
    <original>S</original>
    <variation>R</variation>
    <location>
        <position position="9"/>
    </location>
</feature>
<feature type="sequence conflict" description="In Ref. 1; BAC27545." evidence="5" ref="1">
    <original>W</original>
    <variation>R</variation>
    <location>
        <position position="21"/>
    </location>
</feature>
<feature type="sequence conflict" description="In Ref. 1; BAB23283." evidence="5" ref="1">
    <original>P</original>
    <variation>T</variation>
    <location>
        <position position="150"/>
    </location>
</feature>
<feature type="helix" evidence="7">
    <location>
        <begin position="6"/>
        <end position="8"/>
    </location>
</feature>
<feature type="strand" evidence="7">
    <location>
        <begin position="17"/>
        <end position="23"/>
    </location>
</feature>
<feature type="strand" evidence="7">
    <location>
        <begin position="25"/>
        <end position="33"/>
    </location>
</feature>
<feature type="helix" evidence="7">
    <location>
        <begin position="40"/>
        <end position="42"/>
    </location>
</feature>
<feature type="strand" evidence="7">
    <location>
        <begin position="43"/>
        <end position="47"/>
    </location>
</feature>
<feature type="strand" evidence="7">
    <location>
        <begin position="49"/>
        <end position="56"/>
    </location>
</feature>
<feature type="strand" evidence="7">
    <location>
        <begin position="59"/>
        <end position="68"/>
    </location>
</feature>
<feature type="helix" evidence="7">
    <location>
        <begin position="72"/>
        <end position="74"/>
    </location>
</feature>
<feature type="strand" evidence="7">
    <location>
        <begin position="76"/>
        <end position="80"/>
    </location>
</feature>
<feature type="strand" evidence="7">
    <location>
        <begin position="84"/>
        <end position="93"/>
    </location>
</feature>
<feature type="strand" evidence="7">
    <location>
        <begin position="101"/>
        <end position="104"/>
    </location>
</feature>
<feature type="strand" evidence="7">
    <location>
        <begin position="107"/>
        <end position="109"/>
    </location>
</feature>
<feature type="helix" evidence="7">
    <location>
        <begin position="112"/>
        <end position="130"/>
    </location>
</feature>
<protein>
    <recommendedName>
        <fullName>NudC domain-containing protein 2</fullName>
    </recommendedName>
</protein>
<sequence length="157" mass="17660">MSAPFEERSGVVPCGTPWGQWYQTLEEVFIEVQVPPGTRAQDIQCGLQSRHVALAVGGREILKGKLFDSTIADEGTWTLEDRKMVRIVLTKTKRDAANCWTSLLESEYAADPWVQDQMQRKLTLERFQKENPGFDFSGAEISGNYTKGGPDFSNLEK</sequence>
<keyword id="KW-0002">3D-structure</keyword>
<keyword id="KW-0007">Acetylation</keyword>
<keyword id="KW-0137">Centromere</keyword>
<keyword id="KW-0158">Chromosome</keyword>
<keyword id="KW-0963">Cytoplasm</keyword>
<keyword id="KW-0206">Cytoskeleton</keyword>
<keyword id="KW-0995">Kinetochore</keyword>
<keyword id="KW-0597">Phosphoprotein</keyword>
<keyword id="KW-1185">Reference proteome</keyword>
<reference key="1">
    <citation type="journal article" date="2005" name="Science">
        <title>The transcriptional landscape of the mammalian genome.</title>
        <authorList>
            <person name="Carninci P."/>
            <person name="Kasukawa T."/>
            <person name="Katayama S."/>
            <person name="Gough J."/>
            <person name="Frith M.C."/>
            <person name="Maeda N."/>
            <person name="Oyama R."/>
            <person name="Ravasi T."/>
            <person name="Lenhard B."/>
            <person name="Wells C."/>
            <person name="Kodzius R."/>
            <person name="Shimokawa K."/>
            <person name="Bajic V.B."/>
            <person name="Brenner S.E."/>
            <person name="Batalov S."/>
            <person name="Forrest A.R."/>
            <person name="Zavolan M."/>
            <person name="Davis M.J."/>
            <person name="Wilming L.G."/>
            <person name="Aidinis V."/>
            <person name="Allen J.E."/>
            <person name="Ambesi-Impiombato A."/>
            <person name="Apweiler R."/>
            <person name="Aturaliya R.N."/>
            <person name="Bailey T.L."/>
            <person name="Bansal M."/>
            <person name="Baxter L."/>
            <person name="Beisel K.W."/>
            <person name="Bersano T."/>
            <person name="Bono H."/>
            <person name="Chalk A.M."/>
            <person name="Chiu K.P."/>
            <person name="Choudhary V."/>
            <person name="Christoffels A."/>
            <person name="Clutterbuck D.R."/>
            <person name="Crowe M.L."/>
            <person name="Dalla E."/>
            <person name="Dalrymple B.P."/>
            <person name="de Bono B."/>
            <person name="Della Gatta G."/>
            <person name="di Bernardo D."/>
            <person name="Down T."/>
            <person name="Engstrom P."/>
            <person name="Fagiolini M."/>
            <person name="Faulkner G."/>
            <person name="Fletcher C.F."/>
            <person name="Fukushima T."/>
            <person name="Furuno M."/>
            <person name="Futaki S."/>
            <person name="Gariboldi M."/>
            <person name="Georgii-Hemming P."/>
            <person name="Gingeras T.R."/>
            <person name="Gojobori T."/>
            <person name="Green R.E."/>
            <person name="Gustincich S."/>
            <person name="Harbers M."/>
            <person name="Hayashi Y."/>
            <person name="Hensch T.K."/>
            <person name="Hirokawa N."/>
            <person name="Hill D."/>
            <person name="Huminiecki L."/>
            <person name="Iacono M."/>
            <person name="Ikeo K."/>
            <person name="Iwama A."/>
            <person name="Ishikawa T."/>
            <person name="Jakt M."/>
            <person name="Kanapin A."/>
            <person name="Katoh M."/>
            <person name="Kawasawa Y."/>
            <person name="Kelso J."/>
            <person name="Kitamura H."/>
            <person name="Kitano H."/>
            <person name="Kollias G."/>
            <person name="Krishnan S.P."/>
            <person name="Kruger A."/>
            <person name="Kummerfeld S.K."/>
            <person name="Kurochkin I.V."/>
            <person name="Lareau L.F."/>
            <person name="Lazarevic D."/>
            <person name="Lipovich L."/>
            <person name="Liu J."/>
            <person name="Liuni S."/>
            <person name="McWilliam S."/>
            <person name="Madan Babu M."/>
            <person name="Madera M."/>
            <person name="Marchionni L."/>
            <person name="Matsuda H."/>
            <person name="Matsuzawa S."/>
            <person name="Miki H."/>
            <person name="Mignone F."/>
            <person name="Miyake S."/>
            <person name="Morris K."/>
            <person name="Mottagui-Tabar S."/>
            <person name="Mulder N."/>
            <person name="Nakano N."/>
            <person name="Nakauchi H."/>
            <person name="Ng P."/>
            <person name="Nilsson R."/>
            <person name="Nishiguchi S."/>
            <person name="Nishikawa S."/>
            <person name="Nori F."/>
            <person name="Ohara O."/>
            <person name="Okazaki Y."/>
            <person name="Orlando V."/>
            <person name="Pang K.C."/>
            <person name="Pavan W.J."/>
            <person name="Pavesi G."/>
            <person name="Pesole G."/>
            <person name="Petrovsky N."/>
            <person name="Piazza S."/>
            <person name="Reed J."/>
            <person name="Reid J.F."/>
            <person name="Ring B.Z."/>
            <person name="Ringwald M."/>
            <person name="Rost B."/>
            <person name="Ruan Y."/>
            <person name="Salzberg S.L."/>
            <person name="Sandelin A."/>
            <person name="Schneider C."/>
            <person name="Schoenbach C."/>
            <person name="Sekiguchi K."/>
            <person name="Semple C.A."/>
            <person name="Seno S."/>
            <person name="Sessa L."/>
            <person name="Sheng Y."/>
            <person name="Shibata Y."/>
            <person name="Shimada H."/>
            <person name="Shimada K."/>
            <person name="Silva D."/>
            <person name="Sinclair B."/>
            <person name="Sperling S."/>
            <person name="Stupka E."/>
            <person name="Sugiura K."/>
            <person name="Sultana R."/>
            <person name="Takenaka Y."/>
            <person name="Taki K."/>
            <person name="Tammoja K."/>
            <person name="Tan S.L."/>
            <person name="Tang S."/>
            <person name="Taylor M.S."/>
            <person name="Tegner J."/>
            <person name="Teichmann S.A."/>
            <person name="Ueda H.R."/>
            <person name="van Nimwegen E."/>
            <person name="Verardo R."/>
            <person name="Wei C.L."/>
            <person name="Yagi K."/>
            <person name="Yamanishi H."/>
            <person name="Zabarovsky E."/>
            <person name="Zhu S."/>
            <person name="Zimmer A."/>
            <person name="Hide W."/>
            <person name="Bult C."/>
            <person name="Grimmond S.M."/>
            <person name="Teasdale R.D."/>
            <person name="Liu E.T."/>
            <person name="Brusic V."/>
            <person name="Quackenbush J."/>
            <person name="Wahlestedt C."/>
            <person name="Mattick J.S."/>
            <person name="Hume D.A."/>
            <person name="Kai C."/>
            <person name="Sasaki D."/>
            <person name="Tomaru Y."/>
            <person name="Fukuda S."/>
            <person name="Kanamori-Katayama M."/>
            <person name="Suzuki M."/>
            <person name="Aoki J."/>
            <person name="Arakawa T."/>
            <person name="Iida J."/>
            <person name="Imamura K."/>
            <person name="Itoh M."/>
            <person name="Kato T."/>
            <person name="Kawaji H."/>
            <person name="Kawagashira N."/>
            <person name="Kawashima T."/>
            <person name="Kojima M."/>
            <person name="Kondo S."/>
            <person name="Konno H."/>
            <person name="Nakano K."/>
            <person name="Ninomiya N."/>
            <person name="Nishio T."/>
            <person name="Okada M."/>
            <person name="Plessy C."/>
            <person name="Shibata K."/>
            <person name="Shiraki T."/>
            <person name="Suzuki S."/>
            <person name="Tagami M."/>
            <person name="Waki K."/>
            <person name="Watahiki A."/>
            <person name="Okamura-Oho Y."/>
            <person name="Suzuki H."/>
            <person name="Kawai J."/>
            <person name="Hayashizaki Y."/>
        </authorList>
    </citation>
    <scope>NUCLEOTIDE SEQUENCE [LARGE SCALE MRNA]</scope>
    <source>
        <strain>C57BL/6J</strain>
        <tissue>Embryo</tissue>
        <tissue>Head</tissue>
        <tissue>Liver</tissue>
        <tissue>Testis</tissue>
    </source>
</reference>
<reference key="2">
    <citation type="journal article" date="2009" name="PLoS Biol.">
        <title>Lineage-specific biology revealed by a finished genome assembly of the mouse.</title>
        <authorList>
            <person name="Church D.M."/>
            <person name="Goodstadt L."/>
            <person name="Hillier L.W."/>
            <person name="Zody M.C."/>
            <person name="Goldstein S."/>
            <person name="She X."/>
            <person name="Bult C.J."/>
            <person name="Agarwala R."/>
            <person name="Cherry J.L."/>
            <person name="DiCuccio M."/>
            <person name="Hlavina W."/>
            <person name="Kapustin Y."/>
            <person name="Meric P."/>
            <person name="Maglott D."/>
            <person name="Birtle Z."/>
            <person name="Marques A.C."/>
            <person name="Graves T."/>
            <person name="Zhou S."/>
            <person name="Teague B."/>
            <person name="Potamousis K."/>
            <person name="Churas C."/>
            <person name="Place M."/>
            <person name="Herschleb J."/>
            <person name="Runnheim R."/>
            <person name="Forrest D."/>
            <person name="Amos-Landgraf J."/>
            <person name="Schwartz D.C."/>
            <person name="Cheng Z."/>
            <person name="Lindblad-Toh K."/>
            <person name="Eichler E.E."/>
            <person name="Ponting C.P."/>
        </authorList>
    </citation>
    <scope>NUCLEOTIDE SEQUENCE [LARGE SCALE GENOMIC DNA]</scope>
    <source>
        <strain>C57BL/6J</strain>
    </source>
</reference>
<reference key="3">
    <citation type="journal article" date="2004" name="Genome Res.">
        <title>The status, quality, and expansion of the NIH full-length cDNA project: the Mammalian Gene Collection (MGC).</title>
        <authorList>
            <consortium name="The MGC Project Team"/>
        </authorList>
    </citation>
    <scope>NUCLEOTIDE SEQUENCE [LARGE SCALE MRNA]</scope>
    <source>
        <strain>FVB/N</strain>
        <tissue>Mammary tumor</tissue>
    </source>
</reference>
<reference key="4">
    <citation type="journal article" date="2007" name="J. Immunol.">
        <title>Quantitative time-resolved phosphoproteomic analysis of mast cell signaling.</title>
        <authorList>
            <person name="Cao L."/>
            <person name="Yu K."/>
            <person name="Banh C."/>
            <person name="Nguyen V."/>
            <person name="Ritz A."/>
            <person name="Raphael B.J."/>
            <person name="Kawakami Y."/>
            <person name="Kawakami T."/>
            <person name="Salomon A.R."/>
        </authorList>
    </citation>
    <scope>PHOSPHORYLATION [LARGE SCALE ANALYSIS] AT TYR-145</scope>
    <scope>IDENTIFICATION BY MASS SPECTROMETRY [LARGE SCALE ANALYSIS]</scope>
    <source>
        <tissue>Mast cell</tissue>
    </source>
</reference>
<reference key="5">
    <citation type="journal article" date="2010" name="Cell">
        <title>A tissue-specific atlas of mouse protein phosphorylation and expression.</title>
        <authorList>
            <person name="Huttlin E.L."/>
            <person name="Jedrychowski M.P."/>
            <person name="Elias J.E."/>
            <person name="Goswami T."/>
            <person name="Rad R."/>
            <person name="Beausoleil S.A."/>
            <person name="Villen J."/>
            <person name="Haas W."/>
            <person name="Sowa M.E."/>
            <person name="Gygi S.P."/>
        </authorList>
    </citation>
    <scope>IDENTIFICATION BY MASS SPECTROMETRY [LARGE SCALE ANALYSIS]</scope>
    <source>
        <tissue>Brain</tissue>
        <tissue>Brown adipose tissue</tissue>
        <tissue>Heart</tissue>
        <tissue>Kidney</tissue>
        <tissue>Liver</tissue>
        <tissue>Lung</tissue>
        <tissue>Pancreas</tissue>
        <tissue>Spleen</tissue>
        <tissue>Testis</tissue>
    </source>
</reference>
<reference key="6">
    <citation type="submission" date="2009-02" db="PDB data bank">
        <title>Crystal structure of NUDC domain-containing protein 2 (13542905) from Mus musculus at 1.95 A resolution.</title>
        <authorList>
            <consortium name="Joint center for structural genomics (JCSG)"/>
        </authorList>
    </citation>
    <scope>X-RAY CRYSTALLOGRAPHY (1.95 ANGSTROMS) OF 5-155</scope>
</reference>
<organism>
    <name type="scientific">Mus musculus</name>
    <name type="common">Mouse</name>
    <dbReference type="NCBI Taxonomy" id="10090"/>
    <lineage>
        <taxon>Eukaryota</taxon>
        <taxon>Metazoa</taxon>
        <taxon>Chordata</taxon>
        <taxon>Craniata</taxon>
        <taxon>Vertebrata</taxon>
        <taxon>Euteleostomi</taxon>
        <taxon>Mammalia</taxon>
        <taxon>Eutheria</taxon>
        <taxon>Euarchontoglires</taxon>
        <taxon>Glires</taxon>
        <taxon>Rodentia</taxon>
        <taxon>Myomorpha</taxon>
        <taxon>Muroidea</taxon>
        <taxon>Muridae</taxon>
        <taxon>Murinae</taxon>
        <taxon>Mus</taxon>
        <taxon>Mus</taxon>
    </lineage>
</organism>
<name>NUDC2_MOUSE</name>
<gene>
    <name type="primary">Nudcd2</name>
    <name type="synonym">D11Ertd603e</name>
</gene>
<evidence type="ECO:0000250" key="1"/>
<evidence type="ECO:0000250" key="2">
    <source>
        <dbReference type="UniProtKB" id="Q8WVJ2"/>
    </source>
</evidence>
<evidence type="ECO:0000255" key="3">
    <source>
        <dbReference type="PROSITE-ProRule" id="PRU00547"/>
    </source>
</evidence>
<evidence type="ECO:0000256" key="4">
    <source>
        <dbReference type="SAM" id="MobiDB-lite"/>
    </source>
</evidence>
<evidence type="ECO:0000305" key="5"/>
<evidence type="ECO:0007744" key="6">
    <source>
    </source>
</evidence>
<evidence type="ECO:0007829" key="7">
    <source>
        <dbReference type="PDB" id="2RH0"/>
    </source>
</evidence>
<comment type="function">
    <text evidence="1">May regulate the LIS1/dynein pathway by stabilizing LIS1 with Hsp90 chaperone.</text>
</comment>
<comment type="subunit">
    <text evidence="1">Interacts with LIS1.</text>
</comment>
<comment type="subcellular location">
    <subcellularLocation>
        <location evidence="1">Chromosome</location>
        <location evidence="1">Centromere</location>
        <location evidence="1">Kinetochore</location>
    </subcellularLocation>
    <subcellularLocation>
        <location evidence="1">Cytoplasm</location>
        <location evidence="1">Cytoskeleton</location>
        <location evidence="1">Microtubule organizing center</location>
        <location evidence="1">Centrosome</location>
    </subcellularLocation>
    <subcellularLocation>
        <location evidence="1">Cytoplasm</location>
        <location evidence="1">Cytoskeleton</location>
        <location evidence="1">Spindle pole</location>
    </subcellularLocation>
    <text evidence="1">Associates with centrosomes in interphase and to spindle poles and kinetochores during mitosis.</text>
</comment>
<dbReference type="EMBL" id="AK004388">
    <property type="protein sequence ID" value="BAB23283.1"/>
    <property type="molecule type" value="mRNA"/>
</dbReference>
<dbReference type="EMBL" id="AK005909">
    <property type="protein sequence ID" value="BAB24313.1"/>
    <property type="molecule type" value="mRNA"/>
</dbReference>
<dbReference type="EMBL" id="AK010850">
    <property type="protein sequence ID" value="BAB27222.1"/>
    <property type="molecule type" value="mRNA"/>
</dbReference>
<dbReference type="EMBL" id="AK012388">
    <property type="protein sequence ID" value="BAB28205.1"/>
    <property type="molecule type" value="mRNA"/>
</dbReference>
<dbReference type="EMBL" id="AK031779">
    <property type="protein sequence ID" value="BAC27545.1"/>
    <property type="molecule type" value="mRNA"/>
</dbReference>
<dbReference type="EMBL" id="AL646055">
    <property type="status" value="NOT_ANNOTATED_CDS"/>
    <property type="molecule type" value="Genomic_DNA"/>
</dbReference>
<dbReference type="EMBL" id="BC005646">
    <property type="protein sequence ID" value="AAH05646.1"/>
    <property type="molecule type" value="mRNA"/>
</dbReference>
<dbReference type="CCDS" id="CCDS24549.1"/>
<dbReference type="RefSeq" id="NP_001277626.1">
    <property type="nucleotide sequence ID" value="NM_001290697.1"/>
</dbReference>
<dbReference type="RefSeq" id="NP_080299.4">
    <property type="nucleotide sequence ID" value="NM_026023.5"/>
</dbReference>
<dbReference type="PDB" id="2RH0">
    <property type="method" value="X-ray"/>
    <property type="resolution" value="1.95 A"/>
    <property type="chains" value="A/B/C/D=5-155"/>
</dbReference>
<dbReference type="PDBsum" id="2RH0"/>
<dbReference type="SMR" id="Q9CQ48"/>
<dbReference type="BioGRID" id="206717">
    <property type="interactions" value="6"/>
</dbReference>
<dbReference type="FunCoup" id="Q9CQ48">
    <property type="interactions" value="2444"/>
</dbReference>
<dbReference type="IntAct" id="Q9CQ48">
    <property type="interactions" value="2"/>
</dbReference>
<dbReference type="MINT" id="Q9CQ48"/>
<dbReference type="STRING" id="10090.ENSMUSP00000020578"/>
<dbReference type="GlyGen" id="Q9CQ48">
    <property type="glycosylation" value="2 sites, 1 N-linked glycan (1 site), 1 O-linked glycan (1 site)"/>
</dbReference>
<dbReference type="iPTMnet" id="Q9CQ48"/>
<dbReference type="PhosphoSitePlus" id="Q9CQ48"/>
<dbReference type="SwissPalm" id="Q9CQ48"/>
<dbReference type="jPOST" id="Q9CQ48"/>
<dbReference type="PaxDb" id="10090-ENSMUSP00000020578"/>
<dbReference type="PeptideAtlas" id="Q9CQ48"/>
<dbReference type="ProteomicsDB" id="291924"/>
<dbReference type="Pumba" id="Q9CQ48"/>
<dbReference type="Antibodypedia" id="45873">
    <property type="antibodies" value="78 antibodies from 20 providers"/>
</dbReference>
<dbReference type="DNASU" id="52653"/>
<dbReference type="Ensembl" id="ENSMUST00000020578.11">
    <property type="protein sequence ID" value="ENSMUSP00000020578.5"/>
    <property type="gene ID" value="ENSMUSG00000020328.11"/>
</dbReference>
<dbReference type="GeneID" id="52653"/>
<dbReference type="KEGG" id="mmu:52653"/>
<dbReference type="UCSC" id="uc007ily.3">
    <property type="organism name" value="mouse"/>
</dbReference>
<dbReference type="AGR" id="MGI:1277103"/>
<dbReference type="CTD" id="134492"/>
<dbReference type="MGI" id="MGI:1277103">
    <property type="gene designation" value="Nudcd2"/>
</dbReference>
<dbReference type="VEuPathDB" id="HostDB:ENSMUSG00000020328"/>
<dbReference type="eggNOG" id="KOG2265">
    <property type="taxonomic scope" value="Eukaryota"/>
</dbReference>
<dbReference type="GeneTree" id="ENSGT00390000001644"/>
<dbReference type="InParanoid" id="Q9CQ48"/>
<dbReference type="OMA" id="RDVECSL"/>
<dbReference type="OrthoDB" id="515366at2759"/>
<dbReference type="PhylomeDB" id="Q9CQ48"/>
<dbReference type="TreeFam" id="TF332391"/>
<dbReference type="BioGRID-ORCS" id="52653">
    <property type="hits" value="5 hits in 78 CRISPR screens"/>
</dbReference>
<dbReference type="EvolutionaryTrace" id="Q9CQ48"/>
<dbReference type="PRO" id="PR:Q9CQ48"/>
<dbReference type="Proteomes" id="UP000000589">
    <property type="component" value="Chromosome 11"/>
</dbReference>
<dbReference type="RNAct" id="Q9CQ48">
    <property type="molecule type" value="protein"/>
</dbReference>
<dbReference type="Bgee" id="ENSMUSG00000020328">
    <property type="expression patterns" value="Expressed in pharyngeal arch 2 and 259 other cell types or tissues"/>
</dbReference>
<dbReference type="ExpressionAtlas" id="Q9CQ48">
    <property type="expression patterns" value="baseline and differential"/>
</dbReference>
<dbReference type="GO" id="GO:0005813">
    <property type="term" value="C:centrosome"/>
    <property type="evidence" value="ECO:0007669"/>
    <property type="project" value="UniProtKB-SubCell"/>
</dbReference>
<dbReference type="GO" id="GO:0005829">
    <property type="term" value="C:cytosol"/>
    <property type="evidence" value="ECO:0007669"/>
    <property type="project" value="Ensembl"/>
</dbReference>
<dbReference type="GO" id="GO:0045171">
    <property type="term" value="C:intercellular bridge"/>
    <property type="evidence" value="ECO:0007669"/>
    <property type="project" value="Ensembl"/>
</dbReference>
<dbReference type="GO" id="GO:0000776">
    <property type="term" value="C:kinetochore"/>
    <property type="evidence" value="ECO:0007669"/>
    <property type="project" value="UniProtKB-KW"/>
</dbReference>
<dbReference type="GO" id="GO:0072686">
    <property type="term" value="C:mitotic spindle"/>
    <property type="evidence" value="ECO:0007669"/>
    <property type="project" value="Ensembl"/>
</dbReference>
<dbReference type="GO" id="GO:0000922">
    <property type="term" value="C:spindle pole"/>
    <property type="evidence" value="ECO:0007669"/>
    <property type="project" value="UniProtKB-SubCell"/>
</dbReference>
<dbReference type="CDD" id="cd06494">
    <property type="entry name" value="p23_NUDCD2_like"/>
    <property type="match status" value="1"/>
</dbReference>
<dbReference type="FunFam" id="1.20.5.740:FF:000001">
    <property type="entry name" value="nudC domain-containing protein 2"/>
    <property type="match status" value="1"/>
</dbReference>
<dbReference type="FunFam" id="2.60.40.790:FF:000021">
    <property type="entry name" value="nudC domain-containing protein 2"/>
    <property type="match status" value="1"/>
</dbReference>
<dbReference type="Gene3D" id="2.60.40.790">
    <property type="match status" value="1"/>
</dbReference>
<dbReference type="Gene3D" id="1.20.5.740">
    <property type="entry name" value="Single helix bin"/>
    <property type="match status" value="1"/>
</dbReference>
<dbReference type="InterPro" id="IPR007052">
    <property type="entry name" value="CS_dom"/>
</dbReference>
<dbReference type="InterPro" id="IPR008978">
    <property type="entry name" value="HSP20-like_chaperone"/>
</dbReference>
<dbReference type="InterPro" id="IPR037898">
    <property type="entry name" value="NudC_fam"/>
</dbReference>
<dbReference type="InterPro" id="IPR037902">
    <property type="entry name" value="p23_NUDCD2"/>
</dbReference>
<dbReference type="PANTHER" id="PTHR12356">
    <property type="entry name" value="NUCLEAR MOVEMENT PROTEIN NUDC"/>
    <property type="match status" value="1"/>
</dbReference>
<dbReference type="PANTHER" id="PTHR12356:SF18">
    <property type="entry name" value="NUDC DOMAIN-CONTAINING PROTEIN 2"/>
    <property type="match status" value="1"/>
</dbReference>
<dbReference type="Pfam" id="PF04969">
    <property type="entry name" value="CS"/>
    <property type="match status" value="1"/>
</dbReference>
<dbReference type="SUPFAM" id="SSF49764">
    <property type="entry name" value="HSP20-like chaperones"/>
    <property type="match status" value="1"/>
</dbReference>
<dbReference type="PROSITE" id="PS51203">
    <property type="entry name" value="CS"/>
    <property type="match status" value="1"/>
</dbReference>
<accession>Q9CQ48</accession>
<accession>Q8CD03</accession>
<accession>Q9CY63</accession>
<accession>Q9D0V4</accession>